<evidence type="ECO:0000250" key="1"/>
<evidence type="ECO:0000250" key="2">
    <source>
        <dbReference type="UniProtKB" id="Q9W4C5"/>
    </source>
</evidence>
<evidence type="ECO:0000255" key="3"/>
<evidence type="ECO:0000256" key="4">
    <source>
        <dbReference type="SAM" id="MobiDB-lite"/>
    </source>
</evidence>
<evidence type="ECO:0000305" key="5"/>
<evidence type="ECO:0000312" key="6">
    <source>
        <dbReference type="EMBL" id="EDV34476.1"/>
    </source>
</evidence>
<organism>
    <name type="scientific">Drosophila ananassae</name>
    <name type="common">Fruit fly</name>
    <dbReference type="NCBI Taxonomy" id="7217"/>
    <lineage>
        <taxon>Eukaryota</taxon>
        <taxon>Metazoa</taxon>
        <taxon>Ecdysozoa</taxon>
        <taxon>Arthropoda</taxon>
        <taxon>Hexapoda</taxon>
        <taxon>Insecta</taxon>
        <taxon>Pterygota</taxon>
        <taxon>Neoptera</taxon>
        <taxon>Endopterygota</taxon>
        <taxon>Diptera</taxon>
        <taxon>Brachycera</taxon>
        <taxon>Muscomorpha</taxon>
        <taxon>Ephydroidea</taxon>
        <taxon>Drosophilidae</taxon>
        <taxon>Drosophila</taxon>
        <taxon>Sophophora</taxon>
    </lineage>
</organism>
<reference evidence="6" key="1">
    <citation type="journal article" date="2007" name="Nature">
        <title>Evolution of genes and genomes on the Drosophila phylogeny.</title>
        <authorList>
            <consortium name="Drosophila 12 genomes consortium"/>
        </authorList>
    </citation>
    <scope>NUCLEOTIDE SEQUENCE [LARGE SCALE GENOMIC DNA]</scope>
    <source>
        <strain evidence="6">Tucson 14024-0371.13</strain>
    </source>
</reference>
<name>NAAT1_DROAN</name>
<sequence length="640" mass="71617">MELKPNGNHNNNNAAEKSEDTEKAKAERTNWGNGLEFLMSCISVSVGLGNVWRFPFTAYENGGGAFLIPYIIVLFLIGKPMYYLEMIMGQFTSQGTVKIWSICPGFVGVGYGQAFGTICIISYYSSLLALTLYYLFVSFQSELPWSFCREDWQNCVDSRPAEYTENLITGLASNASTLASNLTTPFSNRGVSLLADNETVKLQSSSEIYFLDVVIKEKLDISDGIGSPDWKLTLALLASWVVIFLVIMRGVKSSGKAAYFLALFPYVVLFVLLIRAVTLEGARDGIIFFLQPQWGELLNPTVWKNAVVQCFFSLAVGSGPIIMFASYNRFDHGIYRDAMIVTTLDTLTSLLGGITIFAILGNLAHNLNIENIQDVVRSGTGLAFISYPDAISKFQAVPQLFSVLFFFMLFVLGIGSIVALQSTIVTIICDQFKGLKYWKVALGTSMCGFLMGLVYVTPGGQWILTLVDFYGGTYVVFILAIFELAGIVWIYGLQNFCDDIEFMCNRRVSLYWRMCWSFFTPVMMIIIFIYSMVTIEPIKYSELYFPEAGNVAGWLLFGIGAAQFPLWGLWYVSRHREGSFCSSIMASLKPSEKWGPANAEVKREWQIFKSQKAAQRAVQKESSKLGFFWRKITNFCGSNI</sequence>
<comment type="function">
    <text evidence="1">Unusual broad substrate spectrum amino acid:sodium cotransporter that promotes absorption of the D isomers of essential amino acids. Neutral amino acids are the preferred substrates, especially methionine and phenylalanine (By similarity).</text>
</comment>
<comment type="subcellular location">
    <subcellularLocation>
        <location evidence="5">Membrane</location>
        <topology evidence="5">Multi-pass membrane protein</topology>
    </subcellularLocation>
</comment>
<comment type="similarity">
    <text evidence="5">Belongs to the sodium:neurotransmitter symporter (SNF) (TC 2.A.22) family.</text>
</comment>
<keyword id="KW-0029">Amino-acid transport</keyword>
<keyword id="KW-0325">Glycoprotein</keyword>
<keyword id="KW-0406">Ion transport</keyword>
<keyword id="KW-0472">Membrane</keyword>
<keyword id="KW-1185">Reference proteome</keyword>
<keyword id="KW-0915">Sodium</keyword>
<keyword id="KW-0739">Sodium transport</keyword>
<keyword id="KW-0769">Symport</keyword>
<keyword id="KW-0812">Transmembrane</keyword>
<keyword id="KW-1133">Transmembrane helix</keyword>
<keyword id="KW-0813">Transport</keyword>
<protein>
    <recommendedName>
        <fullName evidence="2">Sodium-dependent nutrient amino acid transporter 1</fullName>
    </recommendedName>
</protein>
<dbReference type="EMBL" id="CH902622">
    <property type="protein sequence ID" value="EDV34476.1"/>
    <property type="molecule type" value="Genomic_DNA"/>
</dbReference>
<dbReference type="SMR" id="B3MRS1"/>
<dbReference type="FunCoup" id="B3MRS1">
    <property type="interactions" value="41"/>
</dbReference>
<dbReference type="STRING" id="7217.B3MRS1"/>
<dbReference type="GlyCosmos" id="B3MRS1">
    <property type="glycosylation" value="3 sites, No reported glycans"/>
</dbReference>
<dbReference type="EnsemblMetazoa" id="FBtr0125645">
    <property type="protein sequence ID" value="FBpp0124137"/>
    <property type="gene ID" value="FBgn0097950"/>
</dbReference>
<dbReference type="EnsemblMetazoa" id="XM_001963991.4">
    <property type="protein sequence ID" value="XP_001964027.1"/>
    <property type="gene ID" value="LOC6503636"/>
</dbReference>
<dbReference type="GeneID" id="6503636"/>
<dbReference type="KEGG" id="dan:6503636"/>
<dbReference type="CTD" id="31457"/>
<dbReference type="eggNOG" id="KOG3660">
    <property type="taxonomic scope" value="Eukaryota"/>
</dbReference>
<dbReference type="HOGENOM" id="CLU_006855_9_5_1"/>
<dbReference type="InParanoid" id="B3MRS1"/>
<dbReference type="OMA" id="LQNFCDD"/>
<dbReference type="OrthoDB" id="6581954at2759"/>
<dbReference type="PhylomeDB" id="B3MRS1"/>
<dbReference type="Proteomes" id="UP000007801">
    <property type="component" value="Unassembled WGS sequence"/>
</dbReference>
<dbReference type="GO" id="GO:0005886">
    <property type="term" value="C:plasma membrane"/>
    <property type="evidence" value="ECO:0000305"/>
    <property type="project" value="UniProtKB"/>
</dbReference>
<dbReference type="GO" id="GO:0005283">
    <property type="term" value="F:amino acid:sodium symporter activity"/>
    <property type="evidence" value="ECO:0000250"/>
    <property type="project" value="UniProtKB"/>
</dbReference>
<dbReference type="GO" id="GO:0042943">
    <property type="term" value="F:D-amino acid transmembrane transporter activity"/>
    <property type="evidence" value="ECO:0000250"/>
    <property type="project" value="UniProtKB"/>
</dbReference>
<dbReference type="GO" id="GO:0015179">
    <property type="term" value="F:L-amino acid transmembrane transporter activity"/>
    <property type="evidence" value="ECO:0007669"/>
    <property type="project" value="EnsemblMetazoa"/>
</dbReference>
<dbReference type="GO" id="GO:0015175">
    <property type="term" value="F:neutral L-amino acid transmembrane transporter activity"/>
    <property type="evidence" value="ECO:0000250"/>
    <property type="project" value="UniProtKB"/>
</dbReference>
<dbReference type="GO" id="GO:0089718">
    <property type="term" value="P:amino acid import across plasma membrane"/>
    <property type="evidence" value="ECO:0007669"/>
    <property type="project" value="TreeGrafter"/>
</dbReference>
<dbReference type="GO" id="GO:0042940">
    <property type="term" value="P:D-amino acid transport"/>
    <property type="evidence" value="ECO:0000250"/>
    <property type="project" value="UniProtKB"/>
</dbReference>
<dbReference type="GO" id="GO:0015804">
    <property type="term" value="P:neutral amino acid transport"/>
    <property type="evidence" value="ECO:0000250"/>
    <property type="project" value="UniProtKB"/>
</dbReference>
<dbReference type="GO" id="GO:0006814">
    <property type="term" value="P:sodium ion transport"/>
    <property type="evidence" value="ECO:0000250"/>
    <property type="project" value="UniProtKB"/>
</dbReference>
<dbReference type="CDD" id="cd10324">
    <property type="entry name" value="SLC6sbd"/>
    <property type="match status" value="1"/>
</dbReference>
<dbReference type="InterPro" id="IPR000175">
    <property type="entry name" value="Na/ntran_symport"/>
</dbReference>
<dbReference type="InterPro" id="IPR037272">
    <property type="entry name" value="SNS_sf"/>
</dbReference>
<dbReference type="PANTHER" id="PTHR11616:SF321">
    <property type="entry name" value="SODIUM-DEPENDENT NUTRIENT AMINO ACID TRANSPORTER 1-RELATED"/>
    <property type="match status" value="1"/>
</dbReference>
<dbReference type="PANTHER" id="PTHR11616">
    <property type="entry name" value="SODIUM/CHLORIDE DEPENDENT TRANSPORTER"/>
    <property type="match status" value="1"/>
</dbReference>
<dbReference type="Pfam" id="PF00209">
    <property type="entry name" value="SNF"/>
    <property type="match status" value="1"/>
</dbReference>
<dbReference type="PRINTS" id="PR00176">
    <property type="entry name" value="NANEUSMPORT"/>
</dbReference>
<dbReference type="SUPFAM" id="SSF161070">
    <property type="entry name" value="SNF-like"/>
    <property type="match status" value="1"/>
</dbReference>
<dbReference type="PROSITE" id="PS00610">
    <property type="entry name" value="NA_NEUROTRAN_SYMP_1"/>
    <property type="match status" value="1"/>
</dbReference>
<dbReference type="PROSITE" id="PS50267">
    <property type="entry name" value="NA_NEUROTRAN_SYMP_3"/>
    <property type="match status" value="1"/>
</dbReference>
<gene>
    <name evidence="2" type="primary">NAAT1</name>
    <name type="ORF">GF20945</name>
</gene>
<proteinExistence type="inferred from homology"/>
<accession>B3MRS1</accession>
<feature type="chain" id="PRO_0000386581" description="Sodium-dependent nutrient amino acid transporter 1">
    <location>
        <begin position="1"/>
        <end position="640"/>
    </location>
</feature>
<feature type="topological domain" description="Cytoplasmic" evidence="3">
    <location>
        <begin position="1"/>
        <end position="30"/>
    </location>
</feature>
<feature type="transmembrane region" description="Helical; Name=1" evidence="3">
    <location>
        <begin position="31"/>
        <end position="51"/>
    </location>
</feature>
<feature type="transmembrane region" description="Helical; Name=2" evidence="3">
    <location>
        <begin position="64"/>
        <end position="84"/>
    </location>
</feature>
<feature type="transmembrane region" description="Helical; Name=3" evidence="3">
    <location>
        <begin position="117"/>
        <end position="137"/>
    </location>
</feature>
<feature type="transmembrane region" description="Helical; Name=4" evidence="3">
    <location>
        <begin position="228"/>
        <end position="248"/>
    </location>
</feature>
<feature type="transmembrane region" description="Helical; Name=5" evidence="3">
    <location>
        <begin position="257"/>
        <end position="277"/>
    </location>
</feature>
<feature type="transmembrane region" description="Helical; Name=6" evidence="3">
    <location>
        <begin position="306"/>
        <end position="326"/>
    </location>
</feature>
<feature type="transmembrane region" description="Helical; Name=7" evidence="3">
    <location>
        <begin position="340"/>
        <end position="360"/>
    </location>
</feature>
<feature type="transmembrane region" description="Helical; Name=8" evidence="3">
    <location>
        <begin position="400"/>
        <end position="420"/>
    </location>
</feature>
<feature type="transmembrane region" description="Helical; Name=9" evidence="3">
    <location>
        <begin position="447"/>
        <end position="467"/>
    </location>
</feature>
<feature type="transmembrane region" description="Helical; Name=10" evidence="3">
    <location>
        <begin position="473"/>
        <end position="493"/>
    </location>
</feature>
<feature type="transmembrane region" description="Helical; Name=11" evidence="3">
    <location>
        <begin position="515"/>
        <end position="535"/>
    </location>
</feature>
<feature type="transmembrane region" description="Helical; Name=12" evidence="3">
    <location>
        <begin position="551"/>
        <end position="571"/>
    </location>
</feature>
<feature type="region of interest" description="Disordered" evidence="4">
    <location>
        <begin position="1"/>
        <end position="25"/>
    </location>
</feature>
<feature type="compositionally biased region" description="Low complexity" evidence="4">
    <location>
        <begin position="1"/>
        <end position="13"/>
    </location>
</feature>
<feature type="compositionally biased region" description="Basic and acidic residues" evidence="4">
    <location>
        <begin position="16"/>
        <end position="25"/>
    </location>
</feature>
<feature type="glycosylation site" description="N-linked (GlcNAc...) asparagine" evidence="3">
    <location>
        <position position="174"/>
    </location>
</feature>
<feature type="glycosylation site" description="N-linked (GlcNAc...) asparagine" evidence="3">
    <location>
        <position position="181"/>
    </location>
</feature>
<feature type="glycosylation site" description="N-linked (GlcNAc...) asparagine" evidence="3">
    <location>
        <position position="197"/>
    </location>
</feature>